<sequence>MDYKKTLNLPDTPFPMRGDLAKREPAWVAQWEENHVYQAIRAASRGRPRFVLHDGPPYANGDIHIGHAVNKVLKDIIVKSRNMAGYDAHYVPGWDCHGMPIEIQIEKKFGKHLPVTEVQAKARAYALEQIDRQRKDFKRLGVLGEWDRPYLTMNFSNEANEIRALGGILQKGYVFRGLKPVNWCFDCGSALAEAEVEYADRVDPAVDVAFPFADKPGLAAAFGLDSVDDGAVVIWTTTPWTIPANQALNMHPELEYALVRATPAPAHGPLLLLARERVEACLKAWGLQGEVIATAPGAALSGLRFHHPLASADAGYARTSPVYLGDYVTLDAGTGVVHSAPAYGIEDFVSCKAHGLSDDDILNPVLGDGKYADSLPLFGGLSIWDANPRIIEALKAAGSLMDVQKLSHSYMHCWRHKTPIIYRATSQWFAGMDVKPADGGPTLRESALAGIDATAFYPSWGRARLHAMIANRPDWTLSRQRQWGVPMAFFVHKETGALHPRTAELLEQVAQRVEQHGIEAWQSLDPRELLGDEADQYEKNRDTLDVWFDSGTTHATVLGGKDQALGGSHGAELAWPADLYLEGSDQHRGWFHSSLLTGCMLYGQPPYKALLTHGFVVDGQGRKMSKSVGNVIAPQKVSDSLGAEILRLWVASTDYSGELSISDEILKRVVEGYRRIRNTLRFLLANVADFDAVSQAVPYGELFEIDRYALTMTAQMQAEVLAHYERYDFHPAVSRLQTFCSEDLGAFYLDILKDRLYTTAAGSLARRSAQTALLDITQALLKLMAPILSFTAEEAWQVLAQSALQHQADVSRTTIFTEVYHALPPFADADALAAKWARLRAIRAEVQRKLEDVRTAGGIGSSLQAEVDLYAGGDDRALLASLGDDLRFVLIVSRATVHEAQGELRVEITPSAHKKCERCWHWRLDVGSDADHPEICGRCVTNLFGAGEPRDKA</sequence>
<accession>A9IRC2</accession>
<dbReference type="EC" id="6.1.1.5" evidence="1"/>
<dbReference type="EMBL" id="AM902716">
    <property type="protein sequence ID" value="CAP43156.1"/>
    <property type="molecule type" value="Genomic_DNA"/>
</dbReference>
<dbReference type="SMR" id="A9IRC2"/>
<dbReference type="STRING" id="94624.Bpet2814"/>
<dbReference type="KEGG" id="bpt:Bpet2814"/>
<dbReference type="eggNOG" id="COG0060">
    <property type="taxonomic scope" value="Bacteria"/>
</dbReference>
<dbReference type="Proteomes" id="UP000001225">
    <property type="component" value="Chromosome"/>
</dbReference>
<dbReference type="GO" id="GO:0005829">
    <property type="term" value="C:cytosol"/>
    <property type="evidence" value="ECO:0007669"/>
    <property type="project" value="TreeGrafter"/>
</dbReference>
<dbReference type="GO" id="GO:0002161">
    <property type="term" value="F:aminoacyl-tRNA deacylase activity"/>
    <property type="evidence" value="ECO:0007669"/>
    <property type="project" value="InterPro"/>
</dbReference>
<dbReference type="GO" id="GO:0005524">
    <property type="term" value="F:ATP binding"/>
    <property type="evidence" value="ECO:0007669"/>
    <property type="project" value="UniProtKB-UniRule"/>
</dbReference>
<dbReference type="GO" id="GO:0004822">
    <property type="term" value="F:isoleucine-tRNA ligase activity"/>
    <property type="evidence" value="ECO:0007669"/>
    <property type="project" value="UniProtKB-UniRule"/>
</dbReference>
<dbReference type="GO" id="GO:0000049">
    <property type="term" value="F:tRNA binding"/>
    <property type="evidence" value="ECO:0007669"/>
    <property type="project" value="InterPro"/>
</dbReference>
<dbReference type="GO" id="GO:0008270">
    <property type="term" value="F:zinc ion binding"/>
    <property type="evidence" value="ECO:0007669"/>
    <property type="project" value="UniProtKB-UniRule"/>
</dbReference>
<dbReference type="GO" id="GO:0006428">
    <property type="term" value="P:isoleucyl-tRNA aminoacylation"/>
    <property type="evidence" value="ECO:0007669"/>
    <property type="project" value="UniProtKB-UniRule"/>
</dbReference>
<dbReference type="CDD" id="cd07960">
    <property type="entry name" value="Anticodon_Ia_Ile_BEm"/>
    <property type="match status" value="1"/>
</dbReference>
<dbReference type="FunFam" id="3.40.50.620:FF:000042">
    <property type="entry name" value="Isoleucine--tRNA ligase"/>
    <property type="match status" value="1"/>
</dbReference>
<dbReference type="FunFam" id="3.40.50.620:FF:000048">
    <property type="entry name" value="Isoleucine--tRNA ligase"/>
    <property type="match status" value="1"/>
</dbReference>
<dbReference type="Gene3D" id="1.10.730.20">
    <property type="match status" value="1"/>
</dbReference>
<dbReference type="Gene3D" id="3.40.50.620">
    <property type="entry name" value="HUPs"/>
    <property type="match status" value="2"/>
</dbReference>
<dbReference type="Gene3D" id="3.90.740.10">
    <property type="entry name" value="Valyl/Leucyl/Isoleucyl-tRNA synthetase, editing domain"/>
    <property type="match status" value="1"/>
</dbReference>
<dbReference type="HAMAP" id="MF_02002">
    <property type="entry name" value="Ile_tRNA_synth_type1"/>
    <property type="match status" value="1"/>
</dbReference>
<dbReference type="InterPro" id="IPR001412">
    <property type="entry name" value="aa-tRNA-synth_I_CS"/>
</dbReference>
<dbReference type="InterPro" id="IPR002300">
    <property type="entry name" value="aa-tRNA-synth_Ia"/>
</dbReference>
<dbReference type="InterPro" id="IPR033708">
    <property type="entry name" value="Anticodon_Ile_BEm"/>
</dbReference>
<dbReference type="InterPro" id="IPR002301">
    <property type="entry name" value="Ile-tRNA-ligase"/>
</dbReference>
<dbReference type="InterPro" id="IPR023585">
    <property type="entry name" value="Ile-tRNA-ligase_type1"/>
</dbReference>
<dbReference type="InterPro" id="IPR050081">
    <property type="entry name" value="Ile-tRNA_ligase"/>
</dbReference>
<dbReference type="InterPro" id="IPR013155">
    <property type="entry name" value="M/V/L/I-tRNA-synth_anticd-bd"/>
</dbReference>
<dbReference type="InterPro" id="IPR014729">
    <property type="entry name" value="Rossmann-like_a/b/a_fold"/>
</dbReference>
<dbReference type="InterPro" id="IPR009080">
    <property type="entry name" value="tRNAsynth_Ia_anticodon-bd"/>
</dbReference>
<dbReference type="InterPro" id="IPR009008">
    <property type="entry name" value="Val/Leu/Ile-tRNA-synth_edit"/>
</dbReference>
<dbReference type="InterPro" id="IPR010663">
    <property type="entry name" value="Znf_FPG/IleRS"/>
</dbReference>
<dbReference type="NCBIfam" id="TIGR00392">
    <property type="entry name" value="ileS"/>
    <property type="match status" value="1"/>
</dbReference>
<dbReference type="PANTHER" id="PTHR42765:SF1">
    <property type="entry name" value="ISOLEUCINE--TRNA LIGASE, MITOCHONDRIAL"/>
    <property type="match status" value="1"/>
</dbReference>
<dbReference type="PANTHER" id="PTHR42765">
    <property type="entry name" value="SOLEUCYL-TRNA SYNTHETASE"/>
    <property type="match status" value="1"/>
</dbReference>
<dbReference type="Pfam" id="PF08264">
    <property type="entry name" value="Anticodon_1"/>
    <property type="match status" value="1"/>
</dbReference>
<dbReference type="Pfam" id="PF00133">
    <property type="entry name" value="tRNA-synt_1"/>
    <property type="match status" value="1"/>
</dbReference>
<dbReference type="Pfam" id="PF06827">
    <property type="entry name" value="zf-FPG_IleRS"/>
    <property type="match status" value="1"/>
</dbReference>
<dbReference type="PRINTS" id="PR00984">
    <property type="entry name" value="TRNASYNTHILE"/>
</dbReference>
<dbReference type="SUPFAM" id="SSF47323">
    <property type="entry name" value="Anticodon-binding domain of a subclass of class I aminoacyl-tRNA synthetases"/>
    <property type="match status" value="1"/>
</dbReference>
<dbReference type="SUPFAM" id="SSF52374">
    <property type="entry name" value="Nucleotidylyl transferase"/>
    <property type="match status" value="1"/>
</dbReference>
<dbReference type="SUPFAM" id="SSF50677">
    <property type="entry name" value="ValRS/IleRS/LeuRS editing domain"/>
    <property type="match status" value="1"/>
</dbReference>
<dbReference type="PROSITE" id="PS00178">
    <property type="entry name" value="AA_TRNA_LIGASE_I"/>
    <property type="match status" value="1"/>
</dbReference>
<name>SYI_BORPD</name>
<organism>
    <name type="scientific">Bordetella petrii (strain ATCC BAA-461 / DSM 12804 / CCUG 43448)</name>
    <dbReference type="NCBI Taxonomy" id="340100"/>
    <lineage>
        <taxon>Bacteria</taxon>
        <taxon>Pseudomonadati</taxon>
        <taxon>Pseudomonadota</taxon>
        <taxon>Betaproteobacteria</taxon>
        <taxon>Burkholderiales</taxon>
        <taxon>Alcaligenaceae</taxon>
        <taxon>Bordetella</taxon>
    </lineage>
</organism>
<reference key="1">
    <citation type="journal article" date="2008" name="BMC Genomics">
        <title>The missing link: Bordetella petrii is endowed with both the metabolic versatility of environmental bacteria and virulence traits of pathogenic Bordetellae.</title>
        <authorList>
            <person name="Gross R."/>
            <person name="Guzman C.A."/>
            <person name="Sebaihia M."/>
            <person name="Martin dos Santos V.A.P."/>
            <person name="Pieper D.H."/>
            <person name="Koebnik R."/>
            <person name="Lechner M."/>
            <person name="Bartels D."/>
            <person name="Buhrmester J."/>
            <person name="Choudhuri J.V."/>
            <person name="Ebensen T."/>
            <person name="Gaigalat L."/>
            <person name="Herrmann S."/>
            <person name="Khachane A.N."/>
            <person name="Larisch C."/>
            <person name="Link S."/>
            <person name="Linke B."/>
            <person name="Meyer F."/>
            <person name="Mormann S."/>
            <person name="Nakunst D."/>
            <person name="Rueckert C."/>
            <person name="Schneiker-Bekel S."/>
            <person name="Schulze K."/>
            <person name="Voerholter F.-J."/>
            <person name="Yevsa T."/>
            <person name="Engle J.T."/>
            <person name="Goldman W.E."/>
            <person name="Puehler A."/>
            <person name="Goebel U.B."/>
            <person name="Goesmann A."/>
            <person name="Bloecker H."/>
            <person name="Kaiser O."/>
            <person name="Martinez-Arias R."/>
        </authorList>
    </citation>
    <scope>NUCLEOTIDE SEQUENCE [LARGE SCALE GENOMIC DNA]</scope>
    <source>
        <strain>ATCC BAA-461 / DSM 12804 / CCUG 43448</strain>
    </source>
</reference>
<gene>
    <name evidence="1" type="primary">ileS</name>
    <name type="ordered locus">Bpet2814</name>
</gene>
<evidence type="ECO:0000255" key="1">
    <source>
        <dbReference type="HAMAP-Rule" id="MF_02002"/>
    </source>
</evidence>
<protein>
    <recommendedName>
        <fullName evidence="1">Isoleucine--tRNA ligase</fullName>
        <ecNumber evidence="1">6.1.1.5</ecNumber>
    </recommendedName>
    <alternativeName>
        <fullName evidence="1">Isoleucyl-tRNA synthetase</fullName>
        <shortName evidence="1">IleRS</shortName>
    </alternativeName>
</protein>
<keyword id="KW-0030">Aminoacyl-tRNA synthetase</keyword>
<keyword id="KW-0067">ATP-binding</keyword>
<keyword id="KW-0963">Cytoplasm</keyword>
<keyword id="KW-0436">Ligase</keyword>
<keyword id="KW-0479">Metal-binding</keyword>
<keyword id="KW-0547">Nucleotide-binding</keyword>
<keyword id="KW-0648">Protein biosynthesis</keyword>
<keyword id="KW-0862">Zinc</keyword>
<feature type="chain" id="PRO_1000189130" description="Isoleucine--tRNA ligase">
    <location>
        <begin position="1"/>
        <end position="953"/>
    </location>
</feature>
<feature type="short sequence motif" description="'HIGH' region">
    <location>
        <begin position="57"/>
        <end position="67"/>
    </location>
</feature>
<feature type="short sequence motif" description="'KMSKS' region">
    <location>
        <begin position="623"/>
        <end position="627"/>
    </location>
</feature>
<feature type="binding site" evidence="1">
    <location>
        <position position="582"/>
    </location>
    <ligand>
        <name>L-isoleucyl-5'-AMP</name>
        <dbReference type="ChEBI" id="CHEBI:178002"/>
    </ligand>
</feature>
<feature type="binding site" evidence="1">
    <location>
        <position position="626"/>
    </location>
    <ligand>
        <name>ATP</name>
        <dbReference type="ChEBI" id="CHEBI:30616"/>
    </ligand>
</feature>
<feature type="binding site" evidence="1">
    <location>
        <position position="916"/>
    </location>
    <ligand>
        <name>Zn(2+)</name>
        <dbReference type="ChEBI" id="CHEBI:29105"/>
    </ligand>
</feature>
<feature type="binding site" evidence="1">
    <location>
        <position position="919"/>
    </location>
    <ligand>
        <name>Zn(2+)</name>
        <dbReference type="ChEBI" id="CHEBI:29105"/>
    </ligand>
</feature>
<feature type="binding site" evidence="1">
    <location>
        <position position="936"/>
    </location>
    <ligand>
        <name>Zn(2+)</name>
        <dbReference type="ChEBI" id="CHEBI:29105"/>
    </ligand>
</feature>
<feature type="binding site" evidence="1">
    <location>
        <position position="939"/>
    </location>
    <ligand>
        <name>Zn(2+)</name>
        <dbReference type="ChEBI" id="CHEBI:29105"/>
    </ligand>
</feature>
<comment type="function">
    <text evidence="1">Catalyzes the attachment of isoleucine to tRNA(Ile). As IleRS can inadvertently accommodate and process structurally similar amino acids such as valine, to avoid such errors it has two additional distinct tRNA(Ile)-dependent editing activities. One activity is designated as 'pretransfer' editing and involves the hydrolysis of activated Val-AMP. The other activity is designated 'posttransfer' editing and involves deacylation of mischarged Val-tRNA(Ile).</text>
</comment>
<comment type="catalytic activity">
    <reaction evidence="1">
        <text>tRNA(Ile) + L-isoleucine + ATP = L-isoleucyl-tRNA(Ile) + AMP + diphosphate</text>
        <dbReference type="Rhea" id="RHEA:11060"/>
        <dbReference type="Rhea" id="RHEA-COMP:9666"/>
        <dbReference type="Rhea" id="RHEA-COMP:9695"/>
        <dbReference type="ChEBI" id="CHEBI:30616"/>
        <dbReference type="ChEBI" id="CHEBI:33019"/>
        <dbReference type="ChEBI" id="CHEBI:58045"/>
        <dbReference type="ChEBI" id="CHEBI:78442"/>
        <dbReference type="ChEBI" id="CHEBI:78528"/>
        <dbReference type="ChEBI" id="CHEBI:456215"/>
        <dbReference type="EC" id="6.1.1.5"/>
    </reaction>
</comment>
<comment type="cofactor">
    <cofactor evidence="1">
        <name>Zn(2+)</name>
        <dbReference type="ChEBI" id="CHEBI:29105"/>
    </cofactor>
    <text evidence="1">Binds 1 zinc ion per subunit.</text>
</comment>
<comment type="subunit">
    <text evidence="1">Monomer.</text>
</comment>
<comment type="subcellular location">
    <subcellularLocation>
        <location evidence="1">Cytoplasm</location>
    </subcellularLocation>
</comment>
<comment type="domain">
    <text evidence="1">IleRS has two distinct active sites: one for aminoacylation and one for editing. The misactivated valine is translocated from the active site to the editing site, which sterically excludes the correctly activated isoleucine. The single editing site contains two valyl binding pockets, one specific for each substrate (Val-AMP or Val-tRNA(Ile)).</text>
</comment>
<comment type="similarity">
    <text evidence="1">Belongs to the class-I aminoacyl-tRNA synthetase family. IleS type 1 subfamily.</text>
</comment>
<proteinExistence type="inferred from homology"/>